<keyword id="KW-0963">Cytoplasm</keyword>
<keyword id="KW-0648">Protein biosynthesis</keyword>
<feature type="chain" id="PRO_1000071065" description="Ribosome-recycling factor">
    <location>
        <begin position="1"/>
        <end position="184"/>
    </location>
</feature>
<feature type="region of interest" description="Disordered" evidence="2">
    <location>
        <begin position="134"/>
        <end position="167"/>
    </location>
</feature>
<comment type="function">
    <text evidence="1">Responsible for the release of ribosomes from messenger RNA at the termination of protein biosynthesis. May increase the efficiency of translation by recycling ribosomes from one round of translation to another.</text>
</comment>
<comment type="subcellular location">
    <subcellularLocation>
        <location evidence="1">Cytoplasm</location>
    </subcellularLocation>
</comment>
<comment type="similarity">
    <text evidence="1">Belongs to the RRF family.</text>
</comment>
<gene>
    <name evidence="1" type="primary">frr</name>
    <name type="ordered locus">NWMN_1169</name>
</gene>
<proteinExistence type="inferred from homology"/>
<sequence>MSDIINETKSRMQKSIESLSRELANISAGRANSNLLNGVTVDYYGAPTPVQQLASINVPEARLLVISPYDKTSVADIEKAIIAANLGVNPTSDGEVIRIAVPALTEERRKERVKDVKKIGEEAKVSVRNIRRDMNDQLKKDEKNGDITEDELRSGTEDVQKATDNSIKEIDQMIADKEKDIMSV</sequence>
<accession>A6QGF9</accession>
<evidence type="ECO:0000255" key="1">
    <source>
        <dbReference type="HAMAP-Rule" id="MF_00040"/>
    </source>
</evidence>
<evidence type="ECO:0000256" key="2">
    <source>
        <dbReference type="SAM" id="MobiDB-lite"/>
    </source>
</evidence>
<protein>
    <recommendedName>
        <fullName evidence="1">Ribosome-recycling factor</fullName>
        <shortName evidence="1">RRF</shortName>
    </recommendedName>
    <alternativeName>
        <fullName evidence="1">Ribosome-releasing factor</fullName>
    </alternativeName>
</protein>
<organism>
    <name type="scientific">Staphylococcus aureus (strain Newman)</name>
    <dbReference type="NCBI Taxonomy" id="426430"/>
    <lineage>
        <taxon>Bacteria</taxon>
        <taxon>Bacillati</taxon>
        <taxon>Bacillota</taxon>
        <taxon>Bacilli</taxon>
        <taxon>Bacillales</taxon>
        <taxon>Staphylococcaceae</taxon>
        <taxon>Staphylococcus</taxon>
    </lineage>
</organism>
<reference key="1">
    <citation type="journal article" date="2008" name="J. Bacteriol.">
        <title>Genome sequence of Staphylococcus aureus strain Newman and comparative analysis of staphylococcal genomes: polymorphism and evolution of two major pathogenicity islands.</title>
        <authorList>
            <person name="Baba T."/>
            <person name="Bae T."/>
            <person name="Schneewind O."/>
            <person name="Takeuchi F."/>
            <person name="Hiramatsu K."/>
        </authorList>
    </citation>
    <scope>NUCLEOTIDE SEQUENCE [LARGE SCALE GENOMIC DNA]</scope>
    <source>
        <strain>Newman</strain>
    </source>
</reference>
<dbReference type="EMBL" id="AP009351">
    <property type="protein sequence ID" value="BAF67441.1"/>
    <property type="molecule type" value="Genomic_DNA"/>
</dbReference>
<dbReference type="RefSeq" id="WP_001280006.1">
    <property type="nucleotide sequence ID" value="NZ_JBBIAE010000001.1"/>
</dbReference>
<dbReference type="SMR" id="A6QGF9"/>
<dbReference type="KEGG" id="sae:NWMN_1169"/>
<dbReference type="HOGENOM" id="CLU_073981_2_0_9"/>
<dbReference type="Proteomes" id="UP000006386">
    <property type="component" value="Chromosome"/>
</dbReference>
<dbReference type="GO" id="GO:0005737">
    <property type="term" value="C:cytoplasm"/>
    <property type="evidence" value="ECO:0007669"/>
    <property type="project" value="UniProtKB-SubCell"/>
</dbReference>
<dbReference type="GO" id="GO:0043023">
    <property type="term" value="F:ribosomal large subunit binding"/>
    <property type="evidence" value="ECO:0007669"/>
    <property type="project" value="TreeGrafter"/>
</dbReference>
<dbReference type="GO" id="GO:0006415">
    <property type="term" value="P:translational termination"/>
    <property type="evidence" value="ECO:0007669"/>
    <property type="project" value="UniProtKB-UniRule"/>
</dbReference>
<dbReference type="CDD" id="cd00520">
    <property type="entry name" value="RRF"/>
    <property type="match status" value="1"/>
</dbReference>
<dbReference type="FunFam" id="1.10.132.20:FF:000001">
    <property type="entry name" value="Ribosome-recycling factor"/>
    <property type="match status" value="1"/>
</dbReference>
<dbReference type="FunFam" id="3.30.1360.40:FF:000001">
    <property type="entry name" value="Ribosome-recycling factor"/>
    <property type="match status" value="1"/>
</dbReference>
<dbReference type="Gene3D" id="3.30.1360.40">
    <property type="match status" value="1"/>
</dbReference>
<dbReference type="Gene3D" id="1.10.132.20">
    <property type="entry name" value="Ribosome-recycling factor"/>
    <property type="match status" value="1"/>
</dbReference>
<dbReference type="HAMAP" id="MF_00040">
    <property type="entry name" value="RRF"/>
    <property type="match status" value="1"/>
</dbReference>
<dbReference type="InterPro" id="IPR002661">
    <property type="entry name" value="Ribosome_recyc_fac"/>
</dbReference>
<dbReference type="InterPro" id="IPR023584">
    <property type="entry name" value="Ribosome_recyc_fac_dom"/>
</dbReference>
<dbReference type="InterPro" id="IPR036191">
    <property type="entry name" value="RRF_sf"/>
</dbReference>
<dbReference type="NCBIfam" id="TIGR00496">
    <property type="entry name" value="frr"/>
    <property type="match status" value="1"/>
</dbReference>
<dbReference type="PANTHER" id="PTHR20982:SF3">
    <property type="entry name" value="MITOCHONDRIAL RIBOSOME RECYCLING FACTOR PSEUDO 1"/>
    <property type="match status" value="1"/>
</dbReference>
<dbReference type="PANTHER" id="PTHR20982">
    <property type="entry name" value="RIBOSOME RECYCLING FACTOR"/>
    <property type="match status" value="1"/>
</dbReference>
<dbReference type="Pfam" id="PF01765">
    <property type="entry name" value="RRF"/>
    <property type="match status" value="1"/>
</dbReference>
<dbReference type="SUPFAM" id="SSF55194">
    <property type="entry name" value="Ribosome recycling factor, RRF"/>
    <property type="match status" value="1"/>
</dbReference>
<name>RRF_STAAE</name>